<evidence type="ECO:0000250" key="1"/>
<evidence type="ECO:0000255" key="2"/>
<evidence type="ECO:0000269" key="3">
    <source>
    </source>
</evidence>
<evidence type="ECO:0000305" key="4"/>
<sequence length="901" mass="100905">MKRENNLVLSLLFFVIVFLMQVGEAQNRITNVNVGIVNDIGTAYSNMTLLCINMSLSDFYSSHPETQTRLVTTVVDSKNDVVTAAAAALDLITNKEVKAILGPWTSMQAQFMIEMGQKSQVPIVTYSATSPSLASIRSQYFFRATYDDSSQVHAIKEIIKLFGWREVAPVYVDDTFGEGIMPRLTDVLQEINVRIPYRTVISPNATDDEISVELLRMMTLPTRVFVVHLVELLASRFFAKATEIGLMKQGYVWILTNTITDVLSIMNETEIETMQGVLGVKTYVPRSKELENFRSRWTKRFPISDLNVYGLWAYDATTALALAIEEAGTSNLTFVKMDAKRNVSELQGLGVSQYGPKLLQTLSRVRFQGLAGDFQFINGELQPSVFEIVNVNGQGGRTIGFWMKEYGLFKNVDQKPASKTTFSSWQDRLRPIIWPGDTTSVPKGWEIPTNGKRLQIGVPVNNTFQQFVKATRDPITNSTIFSGFSIDYFEAVIQAIPYDISYDFIPFQDGGYDALVYQVYLGKYDAVVADTTISSNRSMYVDFSLPYTPSGVGLVVPVKDSVRRSSTIFLMPLTLALWLISLLSFFIIGLVVWVLEHRVNPDFDGPGQYQLSTIFWFSFSIMVFAPRERVLSFWARVVVIIWYFLVLVLTQSYTASLASLLTTQHLHPTVTNINSLLAKGESVGYQSSFILGRLRDSGFSEASLVSYGSPEHCDALLSKGQAEGGVSAVLMEVPYVRIFLGQYCNKYKMVQTPFKVDGLGFVFPIGSPLVADISRAILKVEESNKANQLENAWFKPIDESCPDPLTNPDPNPSVSFRQLGFDSFWVLFLVAAIVCTMALLKFVYQFLKENPNQRNLRVLWEKFNEPDQKSYIKDVTKCQCSSGQGMPKNGQEGANAVNNGN</sequence>
<name>GLR21_ARATH</name>
<keyword id="KW-0325">Glycoprotein</keyword>
<keyword id="KW-0407">Ion channel</keyword>
<keyword id="KW-0406">Ion transport</keyword>
<keyword id="KW-1071">Ligand-gated ion channel</keyword>
<keyword id="KW-0472">Membrane</keyword>
<keyword id="KW-0675">Receptor</keyword>
<keyword id="KW-1185">Reference proteome</keyword>
<keyword id="KW-0732">Signal</keyword>
<keyword id="KW-0812">Transmembrane</keyword>
<keyword id="KW-1133">Transmembrane helix</keyword>
<keyword id="KW-0813">Transport</keyword>
<accession>O04660</accession>
<accession>Q0WSC5</accession>
<feature type="signal peptide" evidence="2">
    <location>
        <begin position="1"/>
        <end position="25"/>
    </location>
</feature>
<feature type="chain" id="PRO_0000011596" description="Glutamate receptor 2.1">
    <location>
        <begin position="26"/>
        <end position="901"/>
    </location>
</feature>
<feature type="topological domain" description="Extracellular" evidence="2">
    <location>
        <begin position="26"/>
        <end position="574"/>
    </location>
</feature>
<feature type="transmembrane region" description="Helical" evidence="2">
    <location>
        <begin position="575"/>
        <end position="595"/>
    </location>
</feature>
<feature type="topological domain" description="Cytoplasmic" evidence="2">
    <location>
        <begin position="596"/>
        <end position="604"/>
    </location>
</feature>
<feature type="transmembrane region" description="Helical" evidence="2">
    <location>
        <begin position="605"/>
        <end position="625"/>
    </location>
</feature>
<feature type="topological domain" description="Cytoplasmic" evidence="2">
    <location>
        <begin position="626"/>
        <end position="629"/>
    </location>
</feature>
<feature type="transmembrane region" description="Helical" evidence="2">
    <location>
        <begin position="630"/>
        <end position="650"/>
    </location>
</feature>
<feature type="topological domain" description="Extracellular" evidence="2">
    <location>
        <begin position="651"/>
        <end position="823"/>
    </location>
</feature>
<feature type="transmembrane region" description="Helical" evidence="2">
    <location>
        <begin position="824"/>
        <end position="844"/>
    </location>
</feature>
<feature type="topological domain" description="Cytoplasmic" evidence="2">
    <location>
        <begin position="845"/>
        <end position="901"/>
    </location>
</feature>
<feature type="glycosylation site" description="N-linked (GlcNAc...) asparagine" evidence="2">
    <location>
        <position position="46"/>
    </location>
</feature>
<feature type="glycosylation site" description="N-linked (GlcNAc...) asparagine" evidence="2">
    <location>
        <position position="53"/>
    </location>
</feature>
<feature type="glycosylation site" description="N-linked (GlcNAc...) asparagine" evidence="2">
    <location>
        <position position="204"/>
    </location>
</feature>
<feature type="glycosylation site" description="N-linked (GlcNAc...) asparagine" evidence="2">
    <location>
        <position position="267"/>
    </location>
</feature>
<feature type="glycosylation site" description="N-linked (GlcNAc...) asparagine" evidence="2">
    <location>
        <position position="331"/>
    </location>
</feature>
<feature type="glycosylation site" description="N-linked (GlcNAc...) asparagine" evidence="2">
    <location>
        <position position="342"/>
    </location>
</feature>
<feature type="glycosylation site" description="N-linked (GlcNAc...) asparagine" evidence="2">
    <location>
        <position position="461"/>
    </location>
</feature>
<feature type="glycosylation site" description="N-linked (GlcNAc...) asparagine" evidence="2">
    <location>
        <position position="477"/>
    </location>
</feature>
<feature type="glycosylation site" description="N-linked (GlcNAc...) asparagine" evidence="2">
    <location>
        <position position="536"/>
    </location>
</feature>
<protein>
    <recommendedName>
        <fullName>Glutamate receptor 2.1</fullName>
    </recommendedName>
    <alternativeName>
        <fullName>Ligand-gated ion channel 2.1</fullName>
        <shortName>AtGLR3</shortName>
    </alternativeName>
</protein>
<gene>
    <name type="primary">GLR2.1</name>
    <name type="synonym">GLR3</name>
    <name type="ordered locus">At5g27100</name>
    <name type="ORF">A_TM021B04.3</name>
    <name type="ORF">T21B4.10</name>
</gene>
<dbReference type="EMBL" id="AF007271">
    <property type="protein sequence ID" value="AAB61068.1"/>
    <property type="status" value="ALT_SEQ"/>
    <property type="molecule type" value="Genomic_DNA"/>
</dbReference>
<dbReference type="EMBL" id="CP002688">
    <property type="protein sequence ID" value="AED93650.1"/>
    <property type="molecule type" value="Genomic_DNA"/>
</dbReference>
<dbReference type="EMBL" id="AK228008">
    <property type="protein sequence ID" value="BAE99973.1"/>
    <property type="molecule type" value="mRNA"/>
</dbReference>
<dbReference type="PIR" id="T01809">
    <property type="entry name" value="T01809"/>
</dbReference>
<dbReference type="RefSeq" id="NP_198062.2">
    <property type="nucleotide sequence ID" value="NM_122592.4"/>
</dbReference>
<dbReference type="SMR" id="O04660"/>
<dbReference type="BioGRID" id="18042">
    <property type="interactions" value="8"/>
</dbReference>
<dbReference type="FunCoup" id="O04660">
    <property type="interactions" value="171"/>
</dbReference>
<dbReference type="IntAct" id="O04660">
    <property type="interactions" value="1"/>
</dbReference>
<dbReference type="STRING" id="3702.O04660"/>
<dbReference type="GlyCosmos" id="O04660">
    <property type="glycosylation" value="9 sites, No reported glycans"/>
</dbReference>
<dbReference type="GlyGen" id="O04660">
    <property type="glycosylation" value="9 sites"/>
</dbReference>
<dbReference type="iPTMnet" id="O04660"/>
<dbReference type="PaxDb" id="3702-AT5G27100.1"/>
<dbReference type="ProteomicsDB" id="230401"/>
<dbReference type="EnsemblPlants" id="AT5G27100.1">
    <property type="protein sequence ID" value="AT5G27100.1"/>
    <property type="gene ID" value="AT5G27100"/>
</dbReference>
<dbReference type="GeneID" id="832768"/>
<dbReference type="Gramene" id="AT5G27100.1">
    <property type="protein sequence ID" value="AT5G27100.1"/>
    <property type="gene ID" value="AT5G27100"/>
</dbReference>
<dbReference type="KEGG" id="ath:AT5G27100"/>
<dbReference type="Araport" id="AT5G27100"/>
<dbReference type="TAIR" id="AT5G27100">
    <property type="gene designation" value="GLR2.1"/>
</dbReference>
<dbReference type="eggNOG" id="KOG1052">
    <property type="taxonomic scope" value="Eukaryota"/>
</dbReference>
<dbReference type="HOGENOM" id="CLU_007358_0_2_1"/>
<dbReference type="InParanoid" id="O04660"/>
<dbReference type="OMA" id="IEMGQKS"/>
<dbReference type="PhylomeDB" id="O04660"/>
<dbReference type="PRO" id="PR:O04660"/>
<dbReference type="Proteomes" id="UP000006548">
    <property type="component" value="Chromosome 5"/>
</dbReference>
<dbReference type="GO" id="GO:0005886">
    <property type="term" value="C:plasma membrane"/>
    <property type="evidence" value="ECO:0000250"/>
    <property type="project" value="UniProtKB"/>
</dbReference>
<dbReference type="GO" id="GO:0005262">
    <property type="term" value="F:calcium channel activity"/>
    <property type="evidence" value="ECO:0000250"/>
    <property type="project" value="UniProtKB"/>
</dbReference>
<dbReference type="GO" id="GO:0008066">
    <property type="term" value="F:glutamate receptor activity"/>
    <property type="evidence" value="ECO:0000250"/>
    <property type="project" value="UniProtKB"/>
</dbReference>
<dbReference type="GO" id="GO:0015276">
    <property type="term" value="F:ligand-gated monoatomic ion channel activity"/>
    <property type="evidence" value="ECO:0007669"/>
    <property type="project" value="InterPro"/>
</dbReference>
<dbReference type="GO" id="GO:0006816">
    <property type="term" value="P:calcium ion transport"/>
    <property type="evidence" value="ECO:0000250"/>
    <property type="project" value="UniProtKB"/>
</dbReference>
<dbReference type="GO" id="GO:0019722">
    <property type="term" value="P:calcium-mediated signaling"/>
    <property type="evidence" value="ECO:0000250"/>
    <property type="project" value="UniProtKB"/>
</dbReference>
<dbReference type="GO" id="GO:0071230">
    <property type="term" value="P:cellular response to amino acid stimulus"/>
    <property type="evidence" value="ECO:0000250"/>
    <property type="project" value="UniProtKB"/>
</dbReference>
<dbReference type="CDD" id="cd13686">
    <property type="entry name" value="GluR_Plant"/>
    <property type="match status" value="1"/>
</dbReference>
<dbReference type="CDD" id="cd19990">
    <property type="entry name" value="PBP1_GABAb_receptor_plant"/>
    <property type="match status" value="1"/>
</dbReference>
<dbReference type="FunFam" id="1.10.287.70:FF:000037">
    <property type="entry name" value="Glutamate receptor"/>
    <property type="match status" value="1"/>
</dbReference>
<dbReference type="FunFam" id="3.40.190.10:FF:000103">
    <property type="entry name" value="Glutamate receptor"/>
    <property type="match status" value="1"/>
</dbReference>
<dbReference type="FunFam" id="3.40.50.2300:FF:000081">
    <property type="entry name" value="Glutamate receptor"/>
    <property type="match status" value="1"/>
</dbReference>
<dbReference type="FunFam" id="3.40.50.2300:FF:000310">
    <property type="entry name" value="Glutamate receptor"/>
    <property type="match status" value="1"/>
</dbReference>
<dbReference type="Gene3D" id="1.10.287.70">
    <property type="match status" value="1"/>
</dbReference>
<dbReference type="Gene3D" id="3.40.50.2300">
    <property type="match status" value="2"/>
</dbReference>
<dbReference type="Gene3D" id="3.40.190.10">
    <property type="entry name" value="Periplasmic binding protein-like II"/>
    <property type="match status" value="2"/>
</dbReference>
<dbReference type="InterPro" id="IPR001828">
    <property type="entry name" value="ANF_lig-bd_rcpt"/>
</dbReference>
<dbReference type="InterPro" id="IPR044440">
    <property type="entry name" value="GABAb_receptor_plant_PBP1"/>
</dbReference>
<dbReference type="InterPro" id="IPR015683">
    <property type="entry name" value="Ionotropic_Glu_rcpt"/>
</dbReference>
<dbReference type="InterPro" id="IPR001320">
    <property type="entry name" value="Iontro_rcpt_C"/>
</dbReference>
<dbReference type="InterPro" id="IPR017103">
    <property type="entry name" value="Iontropic_Glu_rcpt_pln"/>
</dbReference>
<dbReference type="InterPro" id="IPR028082">
    <property type="entry name" value="Peripla_BP_I"/>
</dbReference>
<dbReference type="InterPro" id="IPR001638">
    <property type="entry name" value="Solute-binding_3/MltF_N"/>
</dbReference>
<dbReference type="PANTHER" id="PTHR34836">
    <property type="entry name" value="OS06G0188250 PROTEIN"/>
    <property type="match status" value="1"/>
</dbReference>
<dbReference type="PANTHER" id="PTHR34836:SF1">
    <property type="entry name" value="OS09G0428600 PROTEIN"/>
    <property type="match status" value="1"/>
</dbReference>
<dbReference type="Pfam" id="PF01094">
    <property type="entry name" value="ANF_receptor"/>
    <property type="match status" value="1"/>
</dbReference>
<dbReference type="Pfam" id="PF00060">
    <property type="entry name" value="Lig_chan"/>
    <property type="match status" value="1"/>
</dbReference>
<dbReference type="Pfam" id="PF00497">
    <property type="entry name" value="SBP_bac_3"/>
    <property type="match status" value="1"/>
</dbReference>
<dbReference type="PIRSF" id="PIRSF037090">
    <property type="entry name" value="Iontro_Glu-like_rcpt_pln"/>
    <property type="match status" value="1"/>
</dbReference>
<dbReference type="SMART" id="SM00079">
    <property type="entry name" value="PBPe"/>
    <property type="match status" value="1"/>
</dbReference>
<dbReference type="SUPFAM" id="SSF53822">
    <property type="entry name" value="Periplasmic binding protein-like I"/>
    <property type="match status" value="1"/>
</dbReference>
<dbReference type="SUPFAM" id="SSF53850">
    <property type="entry name" value="Periplasmic binding protein-like II"/>
    <property type="match status" value="1"/>
</dbReference>
<organism>
    <name type="scientific">Arabidopsis thaliana</name>
    <name type="common">Mouse-ear cress</name>
    <dbReference type="NCBI Taxonomy" id="3702"/>
    <lineage>
        <taxon>Eukaryota</taxon>
        <taxon>Viridiplantae</taxon>
        <taxon>Streptophyta</taxon>
        <taxon>Embryophyta</taxon>
        <taxon>Tracheophyta</taxon>
        <taxon>Spermatophyta</taxon>
        <taxon>Magnoliopsida</taxon>
        <taxon>eudicotyledons</taxon>
        <taxon>Gunneridae</taxon>
        <taxon>Pentapetalae</taxon>
        <taxon>rosids</taxon>
        <taxon>malvids</taxon>
        <taxon>Brassicales</taxon>
        <taxon>Brassicaceae</taxon>
        <taxon>Camelineae</taxon>
        <taxon>Arabidopsis</taxon>
    </lineage>
</organism>
<proteinExistence type="evidence at transcript level"/>
<reference key="1">
    <citation type="journal article" date="2000" name="Nature">
        <title>Sequence and analysis of chromosome 5 of the plant Arabidopsis thaliana.</title>
        <authorList>
            <person name="Tabata S."/>
            <person name="Kaneko T."/>
            <person name="Nakamura Y."/>
            <person name="Kotani H."/>
            <person name="Kato T."/>
            <person name="Asamizu E."/>
            <person name="Miyajima N."/>
            <person name="Sasamoto S."/>
            <person name="Kimura T."/>
            <person name="Hosouchi T."/>
            <person name="Kawashima K."/>
            <person name="Kohara M."/>
            <person name="Matsumoto M."/>
            <person name="Matsuno A."/>
            <person name="Muraki A."/>
            <person name="Nakayama S."/>
            <person name="Nakazaki N."/>
            <person name="Naruo K."/>
            <person name="Okumura S."/>
            <person name="Shinpo S."/>
            <person name="Takeuchi C."/>
            <person name="Wada T."/>
            <person name="Watanabe A."/>
            <person name="Yamada M."/>
            <person name="Yasuda M."/>
            <person name="Sato S."/>
            <person name="de la Bastide M."/>
            <person name="Huang E."/>
            <person name="Spiegel L."/>
            <person name="Gnoj L."/>
            <person name="O'Shaughnessy A."/>
            <person name="Preston R."/>
            <person name="Habermann K."/>
            <person name="Murray J."/>
            <person name="Johnson D."/>
            <person name="Rohlfing T."/>
            <person name="Nelson J."/>
            <person name="Stoneking T."/>
            <person name="Pepin K."/>
            <person name="Spieth J."/>
            <person name="Sekhon M."/>
            <person name="Armstrong J."/>
            <person name="Becker M."/>
            <person name="Belter E."/>
            <person name="Cordum H."/>
            <person name="Cordes M."/>
            <person name="Courtney L."/>
            <person name="Courtney W."/>
            <person name="Dante M."/>
            <person name="Du H."/>
            <person name="Edwards J."/>
            <person name="Fryman J."/>
            <person name="Haakensen B."/>
            <person name="Lamar E."/>
            <person name="Latreille P."/>
            <person name="Leonard S."/>
            <person name="Meyer R."/>
            <person name="Mulvaney E."/>
            <person name="Ozersky P."/>
            <person name="Riley A."/>
            <person name="Strowmatt C."/>
            <person name="Wagner-McPherson C."/>
            <person name="Wollam A."/>
            <person name="Yoakum M."/>
            <person name="Bell M."/>
            <person name="Dedhia N."/>
            <person name="Parnell L."/>
            <person name="Shah R."/>
            <person name="Rodriguez M."/>
            <person name="Hoon See L."/>
            <person name="Vil D."/>
            <person name="Baker J."/>
            <person name="Kirchoff K."/>
            <person name="Toth K."/>
            <person name="King L."/>
            <person name="Bahret A."/>
            <person name="Miller B."/>
            <person name="Marra M.A."/>
            <person name="Martienssen R."/>
            <person name="McCombie W.R."/>
            <person name="Wilson R.K."/>
            <person name="Murphy G."/>
            <person name="Bancroft I."/>
            <person name="Volckaert G."/>
            <person name="Wambutt R."/>
            <person name="Duesterhoeft A."/>
            <person name="Stiekema W."/>
            <person name="Pohl T."/>
            <person name="Entian K.-D."/>
            <person name="Terryn N."/>
            <person name="Hartley N."/>
            <person name="Bent E."/>
            <person name="Johnson S."/>
            <person name="Langham S.-A."/>
            <person name="McCullagh B."/>
            <person name="Robben J."/>
            <person name="Grymonprez B."/>
            <person name="Zimmermann W."/>
            <person name="Ramsperger U."/>
            <person name="Wedler H."/>
            <person name="Balke K."/>
            <person name="Wedler E."/>
            <person name="Peters S."/>
            <person name="van Staveren M."/>
            <person name="Dirkse W."/>
            <person name="Mooijman P."/>
            <person name="Klein Lankhorst R."/>
            <person name="Weitzenegger T."/>
            <person name="Bothe G."/>
            <person name="Rose M."/>
            <person name="Hauf J."/>
            <person name="Berneiser S."/>
            <person name="Hempel S."/>
            <person name="Feldpausch M."/>
            <person name="Lamberth S."/>
            <person name="Villarroel R."/>
            <person name="Gielen J."/>
            <person name="Ardiles W."/>
            <person name="Bents O."/>
            <person name="Lemcke K."/>
            <person name="Kolesov G."/>
            <person name="Mayer K.F.X."/>
            <person name="Rudd S."/>
            <person name="Schoof H."/>
            <person name="Schueller C."/>
            <person name="Zaccaria P."/>
            <person name="Mewes H.-W."/>
            <person name="Bevan M."/>
            <person name="Fransz P.F."/>
        </authorList>
    </citation>
    <scope>NUCLEOTIDE SEQUENCE [LARGE SCALE GENOMIC DNA]</scope>
    <source>
        <strain>cv. Columbia</strain>
    </source>
</reference>
<reference key="2">
    <citation type="journal article" date="2017" name="Plant J.">
        <title>Araport11: a complete reannotation of the Arabidopsis thaliana reference genome.</title>
        <authorList>
            <person name="Cheng C.Y."/>
            <person name="Krishnakumar V."/>
            <person name="Chan A.P."/>
            <person name="Thibaud-Nissen F."/>
            <person name="Schobel S."/>
            <person name="Town C.D."/>
        </authorList>
    </citation>
    <scope>GENOME REANNOTATION</scope>
    <source>
        <strain>cv. Columbia</strain>
    </source>
</reference>
<reference key="3">
    <citation type="submission" date="2006-07" db="EMBL/GenBank/DDBJ databases">
        <title>Large-scale analysis of RIKEN Arabidopsis full-length (RAFL) cDNAs.</title>
        <authorList>
            <person name="Totoki Y."/>
            <person name="Seki M."/>
            <person name="Ishida J."/>
            <person name="Nakajima M."/>
            <person name="Enju A."/>
            <person name="Kamiya A."/>
            <person name="Narusaka M."/>
            <person name="Shin-i T."/>
            <person name="Nakagawa M."/>
            <person name="Sakamoto N."/>
            <person name="Oishi K."/>
            <person name="Kohara Y."/>
            <person name="Kobayashi M."/>
            <person name="Toyoda A."/>
            <person name="Sakaki Y."/>
            <person name="Sakurai T."/>
            <person name="Iida K."/>
            <person name="Akiyama K."/>
            <person name="Satou M."/>
            <person name="Toyoda T."/>
            <person name="Konagaya A."/>
            <person name="Carninci P."/>
            <person name="Kawai J."/>
            <person name="Hayashizaki Y."/>
            <person name="Shinozaki K."/>
        </authorList>
    </citation>
    <scope>NUCLEOTIDE SEQUENCE [LARGE SCALE MRNA]</scope>
    <source>
        <strain>cv. Columbia</strain>
    </source>
</reference>
<reference key="4">
    <citation type="journal article" date="2001" name="Science">
        <title>The identity of plant glutamate receptors.</title>
        <authorList>
            <person name="Lacombe B."/>
            <person name="Becker D."/>
            <person name="Hedrich R."/>
            <person name="DeSalle R."/>
            <person name="Hollmann M."/>
            <person name="Kwak J.M."/>
            <person name="Schroeder J.I."/>
            <person name="Le Novere N."/>
            <person name="Nam H.G."/>
            <person name="Spalding E.P."/>
            <person name="Tester M."/>
            <person name="Turano F.J."/>
            <person name="Chiu J."/>
            <person name="Coruzzi G."/>
        </authorList>
    </citation>
    <scope>GENE FAMILY</scope>
    <scope>NOMENCLATURE</scope>
</reference>
<reference key="5">
    <citation type="journal article" date="2002" name="Mol. Biol. Evol.">
        <title>Phylogenetic and expression analysis of the glutamate-receptor-like gene family in Arabidopsis thaliana.</title>
        <authorList>
            <person name="Chiu J.C."/>
            <person name="Brenner E.D."/>
            <person name="DeSalle R."/>
            <person name="Nitabach M.N."/>
            <person name="Holmes T.C."/>
            <person name="Coruzzi G.M."/>
        </authorList>
    </citation>
    <scope>TISSUE SPECIFICITY</scope>
</reference>
<comment type="function">
    <text>Glutamate-gated receptor that probably acts as a non-selective cation channel. May be involved in light-signal transduction and calcium homeostasis via the regulation of calcium influx into cells.</text>
</comment>
<comment type="subunit">
    <text evidence="1">May form heteromers.</text>
</comment>
<comment type="subcellular location">
    <subcellularLocation>
        <location>Membrane</location>
        <topology>Multi-pass membrane protein</topology>
    </subcellularLocation>
</comment>
<comment type="tissue specificity">
    <text evidence="3">Expressed predominantly in roots. First strongly detected in all cell types of the root except at the apex. Later expressed at the root-shoot junction.</text>
</comment>
<comment type="similarity">
    <text evidence="4">Belongs to the glutamate-gated ion channel (TC 1.A.10.1) family.</text>
</comment>
<comment type="sequence caution" evidence="4">
    <conflict type="erroneous gene model prediction">
        <sequence resource="EMBL-CDS" id="AAB61068"/>
    </conflict>
</comment>